<sequence>MKAKELRDLTSEELMNKLNDFKSELFSLRFQLATGQLENTARIKFVKKDIAKVKTVLAERKLYETRA</sequence>
<evidence type="ECO:0000255" key="1">
    <source>
        <dbReference type="HAMAP-Rule" id="MF_00374"/>
    </source>
</evidence>
<evidence type="ECO:0000305" key="2"/>
<dbReference type="EMBL" id="AM180355">
    <property type="protein sequence ID" value="CAJ66896.1"/>
    <property type="molecule type" value="Genomic_DNA"/>
</dbReference>
<dbReference type="RefSeq" id="WP_003421158.1">
    <property type="nucleotide sequence ID" value="NZ_JAUPES010000043.1"/>
</dbReference>
<dbReference type="RefSeq" id="YP_001086545.1">
    <property type="nucleotide sequence ID" value="NC_009089.1"/>
</dbReference>
<dbReference type="SMR" id="Q18CG9"/>
<dbReference type="STRING" id="272563.CD630_00801"/>
<dbReference type="EnsemblBacteria" id="CAJ66896">
    <property type="protein sequence ID" value="CAJ66896"/>
    <property type="gene ID" value="CD630_00801"/>
</dbReference>
<dbReference type="GeneID" id="66352579"/>
<dbReference type="KEGG" id="cdf:CD630_00801"/>
<dbReference type="KEGG" id="pdc:CDIF630_00147"/>
<dbReference type="PATRIC" id="fig|272563.120.peg.87"/>
<dbReference type="eggNOG" id="COG0255">
    <property type="taxonomic scope" value="Bacteria"/>
</dbReference>
<dbReference type="OrthoDB" id="9815192at2"/>
<dbReference type="PhylomeDB" id="Q18CG9"/>
<dbReference type="BioCyc" id="PDIF272563:G12WB-135-MONOMER"/>
<dbReference type="Proteomes" id="UP000001978">
    <property type="component" value="Chromosome"/>
</dbReference>
<dbReference type="GO" id="GO:0022625">
    <property type="term" value="C:cytosolic large ribosomal subunit"/>
    <property type="evidence" value="ECO:0007669"/>
    <property type="project" value="TreeGrafter"/>
</dbReference>
<dbReference type="GO" id="GO:0003735">
    <property type="term" value="F:structural constituent of ribosome"/>
    <property type="evidence" value="ECO:0007669"/>
    <property type="project" value="InterPro"/>
</dbReference>
<dbReference type="GO" id="GO:0006412">
    <property type="term" value="P:translation"/>
    <property type="evidence" value="ECO:0007669"/>
    <property type="project" value="UniProtKB-UniRule"/>
</dbReference>
<dbReference type="CDD" id="cd00427">
    <property type="entry name" value="Ribosomal_L29_HIP"/>
    <property type="match status" value="1"/>
</dbReference>
<dbReference type="FunFam" id="1.10.287.310:FF:000001">
    <property type="entry name" value="50S ribosomal protein L29"/>
    <property type="match status" value="1"/>
</dbReference>
<dbReference type="Gene3D" id="1.10.287.310">
    <property type="match status" value="1"/>
</dbReference>
<dbReference type="HAMAP" id="MF_00374">
    <property type="entry name" value="Ribosomal_uL29"/>
    <property type="match status" value="1"/>
</dbReference>
<dbReference type="InterPro" id="IPR050063">
    <property type="entry name" value="Ribosomal_protein_uL29"/>
</dbReference>
<dbReference type="InterPro" id="IPR001854">
    <property type="entry name" value="Ribosomal_uL29"/>
</dbReference>
<dbReference type="InterPro" id="IPR018254">
    <property type="entry name" value="Ribosomal_uL29_CS"/>
</dbReference>
<dbReference type="InterPro" id="IPR036049">
    <property type="entry name" value="Ribosomal_uL29_sf"/>
</dbReference>
<dbReference type="NCBIfam" id="TIGR00012">
    <property type="entry name" value="L29"/>
    <property type="match status" value="1"/>
</dbReference>
<dbReference type="PANTHER" id="PTHR10916">
    <property type="entry name" value="60S RIBOSOMAL PROTEIN L35/50S RIBOSOMAL PROTEIN L29"/>
    <property type="match status" value="1"/>
</dbReference>
<dbReference type="PANTHER" id="PTHR10916:SF0">
    <property type="entry name" value="LARGE RIBOSOMAL SUBUNIT PROTEIN UL29C"/>
    <property type="match status" value="1"/>
</dbReference>
<dbReference type="Pfam" id="PF00831">
    <property type="entry name" value="Ribosomal_L29"/>
    <property type="match status" value="1"/>
</dbReference>
<dbReference type="SUPFAM" id="SSF46561">
    <property type="entry name" value="Ribosomal protein L29 (L29p)"/>
    <property type="match status" value="1"/>
</dbReference>
<dbReference type="PROSITE" id="PS00579">
    <property type="entry name" value="RIBOSOMAL_L29"/>
    <property type="match status" value="1"/>
</dbReference>
<proteinExistence type="inferred from homology"/>
<protein>
    <recommendedName>
        <fullName evidence="1">Large ribosomal subunit protein uL29</fullName>
    </recommendedName>
    <alternativeName>
        <fullName evidence="2">50S ribosomal protein L29</fullName>
    </alternativeName>
</protein>
<organism>
    <name type="scientific">Clostridioides difficile (strain 630)</name>
    <name type="common">Peptoclostridium difficile</name>
    <dbReference type="NCBI Taxonomy" id="272563"/>
    <lineage>
        <taxon>Bacteria</taxon>
        <taxon>Bacillati</taxon>
        <taxon>Bacillota</taxon>
        <taxon>Clostridia</taxon>
        <taxon>Peptostreptococcales</taxon>
        <taxon>Peptostreptococcaceae</taxon>
        <taxon>Clostridioides</taxon>
    </lineage>
</organism>
<accession>Q18CG9</accession>
<feature type="chain" id="PRO_1000059964" description="Large ribosomal subunit protein uL29">
    <location>
        <begin position="1"/>
        <end position="67"/>
    </location>
</feature>
<keyword id="KW-1185">Reference proteome</keyword>
<keyword id="KW-0687">Ribonucleoprotein</keyword>
<keyword id="KW-0689">Ribosomal protein</keyword>
<reference key="1">
    <citation type="journal article" date="2006" name="Nat. Genet.">
        <title>The multidrug-resistant human pathogen Clostridium difficile has a highly mobile, mosaic genome.</title>
        <authorList>
            <person name="Sebaihia M."/>
            <person name="Wren B.W."/>
            <person name="Mullany P."/>
            <person name="Fairweather N.F."/>
            <person name="Minton N."/>
            <person name="Stabler R."/>
            <person name="Thomson N.R."/>
            <person name="Roberts A.P."/>
            <person name="Cerdeno-Tarraga A.M."/>
            <person name="Wang H."/>
            <person name="Holden M.T.G."/>
            <person name="Wright A."/>
            <person name="Churcher C."/>
            <person name="Quail M.A."/>
            <person name="Baker S."/>
            <person name="Bason N."/>
            <person name="Brooks K."/>
            <person name="Chillingworth T."/>
            <person name="Cronin A."/>
            <person name="Davis P."/>
            <person name="Dowd L."/>
            <person name="Fraser A."/>
            <person name="Feltwell T."/>
            <person name="Hance Z."/>
            <person name="Holroyd S."/>
            <person name="Jagels K."/>
            <person name="Moule S."/>
            <person name="Mungall K."/>
            <person name="Price C."/>
            <person name="Rabbinowitsch E."/>
            <person name="Sharp S."/>
            <person name="Simmonds M."/>
            <person name="Stevens K."/>
            <person name="Unwin L."/>
            <person name="Whithead S."/>
            <person name="Dupuy B."/>
            <person name="Dougan G."/>
            <person name="Barrell B."/>
            <person name="Parkhill J."/>
        </authorList>
    </citation>
    <scope>NUCLEOTIDE SEQUENCE [LARGE SCALE GENOMIC DNA]</scope>
    <source>
        <strain>630</strain>
    </source>
</reference>
<gene>
    <name evidence="1" type="primary">rpmC</name>
    <name type="ordered locus">CD630_00801</name>
    <name type="ORF">CD0080A</name>
</gene>
<comment type="similarity">
    <text evidence="1">Belongs to the universal ribosomal protein uL29 family.</text>
</comment>
<name>RL29_CLOD6</name>